<organism>
    <name type="scientific">Delftia acidovorans (strain DSM 14801 / SPH-1)</name>
    <dbReference type="NCBI Taxonomy" id="398578"/>
    <lineage>
        <taxon>Bacteria</taxon>
        <taxon>Pseudomonadati</taxon>
        <taxon>Pseudomonadota</taxon>
        <taxon>Betaproteobacteria</taxon>
        <taxon>Burkholderiales</taxon>
        <taxon>Comamonadaceae</taxon>
        <taxon>Delftia</taxon>
    </lineage>
</organism>
<keyword id="KW-1185">Reference proteome</keyword>
<accession>A9BY83</accession>
<gene>
    <name type="ordered locus">Daci_1578</name>
</gene>
<feature type="chain" id="PRO_1000198265" description="UPF0301 protein Daci_1578">
    <location>
        <begin position="1"/>
        <end position="199"/>
    </location>
</feature>
<protein>
    <recommendedName>
        <fullName evidence="1">UPF0301 protein Daci_1578</fullName>
    </recommendedName>
</protein>
<name>Y1578_DELAS</name>
<comment type="similarity">
    <text evidence="1">Belongs to the UPF0301 (AlgH) family.</text>
</comment>
<reference key="1">
    <citation type="submission" date="2007-11" db="EMBL/GenBank/DDBJ databases">
        <title>Complete sequence of Delftia acidovorans DSM 14801 / SPH-1.</title>
        <authorList>
            <person name="Copeland A."/>
            <person name="Lucas S."/>
            <person name="Lapidus A."/>
            <person name="Barry K."/>
            <person name="Glavina del Rio T."/>
            <person name="Dalin E."/>
            <person name="Tice H."/>
            <person name="Pitluck S."/>
            <person name="Lowry S."/>
            <person name="Clum A."/>
            <person name="Schmutz J."/>
            <person name="Larimer F."/>
            <person name="Land M."/>
            <person name="Hauser L."/>
            <person name="Kyrpides N."/>
            <person name="Kim E."/>
            <person name="Schleheck D."/>
            <person name="Richardson P."/>
        </authorList>
    </citation>
    <scope>NUCLEOTIDE SEQUENCE [LARGE SCALE GENOMIC DNA]</scope>
    <source>
        <strain>DSM 14801 / SPH-1</strain>
    </source>
</reference>
<evidence type="ECO:0000255" key="1">
    <source>
        <dbReference type="HAMAP-Rule" id="MF_00758"/>
    </source>
</evidence>
<dbReference type="EMBL" id="CP000884">
    <property type="protein sequence ID" value="ABX34222.1"/>
    <property type="molecule type" value="Genomic_DNA"/>
</dbReference>
<dbReference type="RefSeq" id="WP_012203507.1">
    <property type="nucleotide sequence ID" value="NC_010002.1"/>
</dbReference>
<dbReference type="SMR" id="A9BY83"/>
<dbReference type="STRING" id="398578.Daci_1578"/>
<dbReference type="KEGG" id="dac:Daci_1578"/>
<dbReference type="eggNOG" id="COG1678">
    <property type="taxonomic scope" value="Bacteria"/>
</dbReference>
<dbReference type="HOGENOM" id="CLU_057596_1_0_4"/>
<dbReference type="Proteomes" id="UP000000784">
    <property type="component" value="Chromosome"/>
</dbReference>
<dbReference type="GO" id="GO:0005829">
    <property type="term" value="C:cytosol"/>
    <property type="evidence" value="ECO:0007669"/>
    <property type="project" value="TreeGrafter"/>
</dbReference>
<dbReference type="Gene3D" id="3.40.1740.10">
    <property type="entry name" value="VC0467-like"/>
    <property type="match status" value="1"/>
</dbReference>
<dbReference type="HAMAP" id="MF_00758">
    <property type="entry name" value="UPF0301"/>
    <property type="match status" value="1"/>
</dbReference>
<dbReference type="InterPro" id="IPR003774">
    <property type="entry name" value="AlgH-like"/>
</dbReference>
<dbReference type="NCBIfam" id="NF001266">
    <property type="entry name" value="PRK00228.1-1"/>
    <property type="match status" value="1"/>
</dbReference>
<dbReference type="PANTHER" id="PTHR30327">
    <property type="entry name" value="UNCHARACTERIZED PROTEIN YQGE"/>
    <property type="match status" value="1"/>
</dbReference>
<dbReference type="PANTHER" id="PTHR30327:SF1">
    <property type="entry name" value="UPF0301 PROTEIN YQGE"/>
    <property type="match status" value="1"/>
</dbReference>
<dbReference type="Pfam" id="PF02622">
    <property type="entry name" value="DUF179"/>
    <property type="match status" value="1"/>
</dbReference>
<dbReference type="SUPFAM" id="SSF143456">
    <property type="entry name" value="VC0467-like"/>
    <property type="match status" value="1"/>
</dbReference>
<proteinExistence type="inferred from homology"/>
<sequence length="199" mass="21479">MSAETAPINLTHHFLIAMPGLEDEAFSRSVIYLCEHSERGALGLIINKPSQLTLEGLLEKVDLALGREDLRGNRVFNGGPVQTDRGFVLHDPMVIEGAPDDESAYASTMTIPGGLEMTTSKDVLEALSDGAGPKRLLVTLGYASWGEGQLESELAENAWLTVGADANVIFDTPVDDRYDRALGLLGLQRWMISPEAGRA</sequence>